<accession>A0QV42</accession>
<accession>I7G010</accession>
<name>RL19_MYCS2</name>
<comment type="function">
    <text evidence="1">This protein is located at the 30S-50S ribosomal subunit interface and may play a role in the structure and function of the aminoacyl-tRNA binding site.</text>
</comment>
<comment type="similarity">
    <text evidence="1">Belongs to the bacterial ribosomal protein bL19 family.</text>
</comment>
<evidence type="ECO:0000255" key="1">
    <source>
        <dbReference type="HAMAP-Rule" id="MF_00402"/>
    </source>
</evidence>
<evidence type="ECO:0000305" key="2"/>
<evidence type="ECO:0007829" key="3">
    <source>
        <dbReference type="PDB" id="5XYM"/>
    </source>
</evidence>
<organism>
    <name type="scientific">Mycolicibacterium smegmatis (strain ATCC 700084 / mc(2)155)</name>
    <name type="common">Mycobacterium smegmatis</name>
    <dbReference type="NCBI Taxonomy" id="246196"/>
    <lineage>
        <taxon>Bacteria</taxon>
        <taxon>Bacillati</taxon>
        <taxon>Actinomycetota</taxon>
        <taxon>Actinomycetes</taxon>
        <taxon>Mycobacteriales</taxon>
        <taxon>Mycobacteriaceae</taxon>
        <taxon>Mycolicibacterium</taxon>
    </lineage>
</organism>
<proteinExistence type="evidence at protein level"/>
<sequence>MNTLDFVDQASLRDDIPTFSPGDTVNVHVKVIEGSKERIQVFKGVVIRRQGGGISETFTVRKESYGVGVERTFPVHSPNIDHIDVLTRGDVRRAKLYYLRELRGKKAKIKEKR</sequence>
<protein>
    <recommendedName>
        <fullName evidence="1">Large ribosomal subunit protein bL19</fullName>
    </recommendedName>
    <alternativeName>
        <fullName evidence="2">50S ribosomal protein L19</fullName>
    </alternativeName>
</protein>
<dbReference type="EMBL" id="CP000480">
    <property type="protein sequence ID" value="ABK69938.1"/>
    <property type="molecule type" value="Genomic_DNA"/>
</dbReference>
<dbReference type="EMBL" id="CP001663">
    <property type="protein sequence ID" value="AFP38847.1"/>
    <property type="molecule type" value="Genomic_DNA"/>
</dbReference>
<dbReference type="RefSeq" id="WP_003893806.1">
    <property type="nucleotide sequence ID" value="NZ_SIJM01000012.1"/>
</dbReference>
<dbReference type="RefSeq" id="YP_886780.1">
    <property type="nucleotide sequence ID" value="NC_008596.1"/>
</dbReference>
<dbReference type="PDB" id="5O60">
    <property type="method" value="EM"/>
    <property type="resolution" value="3.20 A"/>
    <property type="chains" value="Q=1-113"/>
</dbReference>
<dbReference type="PDB" id="5O61">
    <property type="method" value="EM"/>
    <property type="resolution" value="3.31 A"/>
    <property type="chains" value="Q=1-113"/>
</dbReference>
<dbReference type="PDB" id="5XYM">
    <property type="method" value="EM"/>
    <property type="resolution" value="3.08 A"/>
    <property type="chains" value="P=1-113"/>
</dbReference>
<dbReference type="PDB" id="5ZEB">
    <property type="method" value="EM"/>
    <property type="resolution" value="3.40 A"/>
    <property type="chains" value="Q=1-113"/>
</dbReference>
<dbReference type="PDB" id="5ZEP">
    <property type="method" value="EM"/>
    <property type="resolution" value="3.40 A"/>
    <property type="chains" value="Q=1-113"/>
</dbReference>
<dbReference type="PDB" id="5ZET">
    <property type="method" value="EM"/>
    <property type="resolution" value="3.20 A"/>
    <property type="chains" value="Q=1-113"/>
</dbReference>
<dbReference type="PDB" id="6DZI">
    <property type="method" value="EM"/>
    <property type="resolution" value="3.46 A"/>
    <property type="chains" value="Q=1-113"/>
</dbReference>
<dbReference type="PDB" id="6DZP">
    <property type="method" value="EM"/>
    <property type="resolution" value="3.42 A"/>
    <property type="chains" value="Q=1-113"/>
</dbReference>
<dbReference type="PDB" id="7S0S">
    <property type="method" value="EM"/>
    <property type="resolution" value="3.05 A"/>
    <property type="chains" value="R=1-113"/>
</dbReference>
<dbReference type="PDB" id="7XAM">
    <property type="method" value="EM"/>
    <property type="resolution" value="2.80 A"/>
    <property type="chains" value="Q=1-113"/>
</dbReference>
<dbReference type="PDB" id="7Y41">
    <property type="method" value="EM"/>
    <property type="resolution" value="4.10 A"/>
    <property type="chains" value="Q=1-113"/>
</dbReference>
<dbReference type="PDB" id="8FR8">
    <property type="method" value="EM"/>
    <property type="resolution" value="2.76 A"/>
    <property type="chains" value="C=1-113"/>
</dbReference>
<dbReference type="PDB" id="8KAB">
    <property type="method" value="EM"/>
    <property type="resolution" value="3.30 A"/>
    <property type="chains" value="Q=1-113"/>
</dbReference>
<dbReference type="PDB" id="8V9J">
    <property type="method" value="EM"/>
    <property type="resolution" value="3.10 A"/>
    <property type="chains" value="R=1-113"/>
</dbReference>
<dbReference type="PDB" id="8V9K">
    <property type="method" value="EM"/>
    <property type="resolution" value="3.10 A"/>
    <property type="chains" value="R=1-113"/>
</dbReference>
<dbReference type="PDB" id="8V9L">
    <property type="method" value="EM"/>
    <property type="resolution" value="3.00 A"/>
    <property type="chains" value="R=1-113"/>
</dbReference>
<dbReference type="PDB" id="8VIO">
    <property type="method" value="EM"/>
    <property type="resolution" value="3.26 A"/>
    <property type="chains" value="Q=1-113"/>
</dbReference>
<dbReference type="PDB" id="8VK0">
    <property type="method" value="EM"/>
    <property type="resolution" value="3.14 A"/>
    <property type="chains" value="Q=1-113"/>
</dbReference>
<dbReference type="PDB" id="8VK7">
    <property type="method" value="EM"/>
    <property type="resolution" value="3.09 A"/>
    <property type="chains" value="Q=1-113"/>
</dbReference>
<dbReference type="PDB" id="8VKI">
    <property type="method" value="EM"/>
    <property type="resolution" value="2.96 A"/>
    <property type="chains" value="Q=1-113"/>
</dbReference>
<dbReference type="PDB" id="8VKW">
    <property type="method" value="EM"/>
    <property type="resolution" value="3.44 A"/>
    <property type="chains" value="Q=1-113"/>
</dbReference>
<dbReference type="PDB" id="8VR4">
    <property type="method" value="EM"/>
    <property type="resolution" value="2.80 A"/>
    <property type="chains" value="Q=1-113"/>
</dbReference>
<dbReference type="PDB" id="8VR8">
    <property type="method" value="EM"/>
    <property type="resolution" value="3.25 A"/>
    <property type="chains" value="Q=1-113"/>
</dbReference>
<dbReference type="PDB" id="8VRL">
    <property type="method" value="EM"/>
    <property type="resolution" value="3.33 A"/>
    <property type="chains" value="Q=1-113"/>
</dbReference>
<dbReference type="PDB" id="8WHX">
    <property type="method" value="EM"/>
    <property type="resolution" value="2.80 A"/>
    <property type="chains" value="S=1-113"/>
</dbReference>
<dbReference type="PDB" id="8WHY">
    <property type="method" value="EM"/>
    <property type="resolution" value="2.70 A"/>
    <property type="chains" value="S=1-113"/>
</dbReference>
<dbReference type="PDB" id="8WI7">
    <property type="method" value="EM"/>
    <property type="resolution" value="3.50 A"/>
    <property type="chains" value="S=1-113"/>
</dbReference>
<dbReference type="PDB" id="8WI8">
    <property type="method" value="EM"/>
    <property type="resolution" value="2.70 A"/>
    <property type="chains" value="S=1-113"/>
</dbReference>
<dbReference type="PDB" id="8WIB">
    <property type="method" value="EM"/>
    <property type="resolution" value="3.50 A"/>
    <property type="chains" value="S=1-113"/>
</dbReference>
<dbReference type="PDB" id="8WIC">
    <property type="method" value="EM"/>
    <property type="resolution" value="3.50 A"/>
    <property type="chains" value="S=1-113"/>
</dbReference>
<dbReference type="PDB" id="8XZ3">
    <property type="method" value="EM"/>
    <property type="resolution" value="3.60 A"/>
    <property type="chains" value="Q=1-113"/>
</dbReference>
<dbReference type="PDBsum" id="5O60"/>
<dbReference type="PDBsum" id="5O61"/>
<dbReference type="PDBsum" id="5XYM"/>
<dbReference type="PDBsum" id="5ZEB"/>
<dbReference type="PDBsum" id="5ZEP"/>
<dbReference type="PDBsum" id="5ZET"/>
<dbReference type="PDBsum" id="6DZI"/>
<dbReference type="PDBsum" id="6DZP"/>
<dbReference type="PDBsum" id="7S0S"/>
<dbReference type="PDBsum" id="7XAM"/>
<dbReference type="PDBsum" id="7Y41"/>
<dbReference type="PDBsum" id="8FR8"/>
<dbReference type="PDBsum" id="8KAB"/>
<dbReference type="PDBsum" id="8V9J"/>
<dbReference type="PDBsum" id="8V9K"/>
<dbReference type="PDBsum" id="8V9L"/>
<dbReference type="PDBsum" id="8VIO"/>
<dbReference type="PDBsum" id="8VK0"/>
<dbReference type="PDBsum" id="8VK7"/>
<dbReference type="PDBsum" id="8VKI"/>
<dbReference type="PDBsum" id="8VKW"/>
<dbReference type="PDBsum" id="8VR4"/>
<dbReference type="PDBsum" id="8VR8"/>
<dbReference type="PDBsum" id="8VRL"/>
<dbReference type="PDBsum" id="8WHX"/>
<dbReference type="PDBsum" id="8WHY"/>
<dbReference type="PDBsum" id="8WI7"/>
<dbReference type="PDBsum" id="8WI8"/>
<dbReference type="PDBsum" id="8WIB"/>
<dbReference type="PDBsum" id="8WIC"/>
<dbReference type="PDBsum" id="8XZ3"/>
<dbReference type="EMDB" id="EMD-29397"/>
<dbReference type="EMDB" id="EMD-33096"/>
<dbReference type="EMDB" id="EMD-33599"/>
<dbReference type="EMDB" id="EMD-37007"/>
<dbReference type="EMDB" id="EMD-3750"/>
<dbReference type="EMDB" id="EMD-3751"/>
<dbReference type="EMDB" id="EMD-37551"/>
<dbReference type="EMDB" id="EMD-37552"/>
<dbReference type="EMDB" id="EMD-37559"/>
<dbReference type="EMDB" id="EMD-37560"/>
<dbReference type="EMDB" id="EMD-37562"/>
<dbReference type="EMDB" id="EMD-37563"/>
<dbReference type="EMDB" id="EMD-38788"/>
<dbReference type="EMDB" id="EMD-43074"/>
<dbReference type="EMDB" id="EMD-43075"/>
<dbReference type="EMDB" id="EMD-43076"/>
<dbReference type="EMDB" id="EMD-43267"/>
<dbReference type="EMDB" id="EMD-43294"/>
<dbReference type="EMDB" id="EMD-43305"/>
<dbReference type="EMDB" id="EMD-43317"/>
<dbReference type="EMDB" id="EMD-43333"/>
<dbReference type="EMDB" id="EMD-43476"/>
<dbReference type="EMDB" id="EMD-43477"/>
<dbReference type="EMDB" id="EMD-43484"/>
<dbReference type="EMDB" id="EMD-6789"/>
<dbReference type="EMDB" id="EMD-6920"/>
<dbReference type="EMDB" id="EMD-6921"/>
<dbReference type="EMDB" id="EMD-6922"/>
<dbReference type="EMDB" id="EMD-8932"/>
<dbReference type="EMDB" id="EMD-8937"/>
<dbReference type="SMR" id="A0QV42"/>
<dbReference type="IntAct" id="A0QV42">
    <property type="interactions" value="2"/>
</dbReference>
<dbReference type="STRING" id="246196.MSMEG_2440"/>
<dbReference type="PaxDb" id="246196-MSMEI_2379"/>
<dbReference type="GeneID" id="93457231"/>
<dbReference type="KEGG" id="msb:LJ00_12135"/>
<dbReference type="KEGG" id="msg:MSMEI_2379"/>
<dbReference type="KEGG" id="msm:MSMEG_2440"/>
<dbReference type="PATRIC" id="fig|246196.19.peg.2405"/>
<dbReference type="eggNOG" id="COG0335">
    <property type="taxonomic scope" value="Bacteria"/>
</dbReference>
<dbReference type="OrthoDB" id="9803541at2"/>
<dbReference type="Proteomes" id="UP000000757">
    <property type="component" value="Chromosome"/>
</dbReference>
<dbReference type="Proteomes" id="UP000006158">
    <property type="component" value="Chromosome"/>
</dbReference>
<dbReference type="GO" id="GO:0022625">
    <property type="term" value="C:cytosolic large ribosomal subunit"/>
    <property type="evidence" value="ECO:0007669"/>
    <property type="project" value="TreeGrafter"/>
</dbReference>
<dbReference type="GO" id="GO:0003735">
    <property type="term" value="F:structural constituent of ribosome"/>
    <property type="evidence" value="ECO:0007669"/>
    <property type="project" value="InterPro"/>
</dbReference>
<dbReference type="GO" id="GO:0006412">
    <property type="term" value="P:translation"/>
    <property type="evidence" value="ECO:0007669"/>
    <property type="project" value="UniProtKB-UniRule"/>
</dbReference>
<dbReference type="FunFam" id="2.30.30.790:FF:000001">
    <property type="entry name" value="50S ribosomal protein L19"/>
    <property type="match status" value="1"/>
</dbReference>
<dbReference type="Gene3D" id="2.30.30.790">
    <property type="match status" value="1"/>
</dbReference>
<dbReference type="HAMAP" id="MF_00402">
    <property type="entry name" value="Ribosomal_bL19"/>
    <property type="match status" value="1"/>
</dbReference>
<dbReference type="InterPro" id="IPR001857">
    <property type="entry name" value="Ribosomal_bL19"/>
</dbReference>
<dbReference type="InterPro" id="IPR018257">
    <property type="entry name" value="Ribosomal_bL19_CS"/>
</dbReference>
<dbReference type="InterPro" id="IPR038657">
    <property type="entry name" value="Ribosomal_bL19_sf"/>
</dbReference>
<dbReference type="InterPro" id="IPR008991">
    <property type="entry name" value="Translation_prot_SH3-like_sf"/>
</dbReference>
<dbReference type="NCBIfam" id="TIGR01024">
    <property type="entry name" value="rplS_bact"/>
    <property type="match status" value="1"/>
</dbReference>
<dbReference type="PANTHER" id="PTHR15680:SF9">
    <property type="entry name" value="LARGE RIBOSOMAL SUBUNIT PROTEIN BL19M"/>
    <property type="match status" value="1"/>
</dbReference>
<dbReference type="PANTHER" id="PTHR15680">
    <property type="entry name" value="RIBOSOMAL PROTEIN L19"/>
    <property type="match status" value="1"/>
</dbReference>
<dbReference type="Pfam" id="PF01245">
    <property type="entry name" value="Ribosomal_L19"/>
    <property type="match status" value="1"/>
</dbReference>
<dbReference type="PIRSF" id="PIRSF002191">
    <property type="entry name" value="Ribosomal_L19"/>
    <property type="match status" value="1"/>
</dbReference>
<dbReference type="PRINTS" id="PR00061">
    <property type="entry name" value="RIBOSOMALL19"/>
</dbReference>
<dbReference type="SUPFAM" id="SSF50104">
    <property type="entry name" value="Translation proteins SH3-like domain"/>
    <property type="match status" value="1"/>
</dbReference>
<dbReference type="PROSITE" id="PS01015">
    <property type="entry name" value="RIBOSOMAL_L19"/>
    <property type="match status" value="1"/>
</dbReference>
<gene>
    <name evidence="1" type="primary">rplS</name>
    <name type="ordered locus">MSMEG_2440</name>
    <name type="ordered locus">MSMEI_2379</name>
</gene>
<keyword id="KW-0002">3D-structure</keyword>
<keyword id="KW-1185">Reference proteome</keyword>
<keyword id="KW-0687">Ribonucleoprotein</keyword>
<keyword id="KW-0689">Ribosomal protein</keyword>
<reference key="1">
    <citation type="submission" date="2006-10" db="EMBL/GenBank/DDBJ databases">
        <authorList>
            <person name="Fleischmann R.D."/>
            <person name="Dodson R.J."/>
            <person name="Haft D.H."/>
            <person name="Merkel J.S."/>
            <person name="Nelson W.C."/>
            <person name="Fraser C.M."/>
        </authorList>
    </citation>
    <scope>NUCLEOTIDE SEQUENCE [LARGE SCALE GENOMIC DNA]</scope>
    <source>
        <strain>ATCC 700084 / mc(2)155</strain>
    </source>
</reference>
<reference key="2">
    <citation type="journal article" date="2007" name="Genome Biol.">
        <title>Interrupted coding sequences in Mycobacterium smegmatis: authentic mutations or sequencing errors?</title>
        <authorList>
            <person name="Deshayes C."/>
            <person name="Perrodou E."/>
            <person name="Gallien S."/>
            <person name="Euphrasie D."/>
            <person name="Schaeffer C."/>
            <person name="Van-Dorsselaer A."/>
            <person name="Poch O."/>
            <person name="Lecompte O."/>
            <person name="Reyrat J.-M."/>
        </authorList>
    </citation>
    <scope>NUCLEOTIDE SEQUENCE [LARGE SCALE GENOMIC DNA]</scope>
    <source>
        <strain>ATCC 700084 / mc(2)155</strain>
    </source>
</reference>
<reference key="3">
    <citation type="journal article" date="2009" name="Genome Res.">
        <title>Ortho-proteogenomics: multiple proteomes investigation through orthology and a new MS-based protocol.</title>
        <authorList>
            <person name="Gallien S."/>
            <person name="Perrodou E."/>
            <person name="Carapito C."/>
            <person name="Deshayes C."/>
            <person name="Reyrat J.-M."/>
            <person name="Van Dorsselaer A."/>
            <person name="Poch O."/>
            <person name="Schaeffer C."/>
            <person name="Lecompte O."/>
        </authorList>
    </citation>
    <scope>NUCLEOTIDE SEQUENCE [LARGE SCALE GENOMIC DNA]</scope>
    <scope>IDENTIFICATION BY MASS SPECTROMETRY [LARGE SCALE ANALYSIS]</scope>
    <scope>IDENTIFICATION OF N-TERMINUS</scope>
    <source>
        <strain>ATCC 700084 / mc(2)155</strain>
    </source>
</reference>
<feature type="chain" id="PRO_1000049700" description="Large ribosomal subunit protein bL19">
    <location>
        <begin position="1"/>
        <end position="113"/>
    </location>
</feature>
<feature type="turn" evidence="3">
    <location>
        <begin position="6"/>
        <end position="11"/>
    </location>
</feature>
<feature type="strand" evidence="3">
    <location>
        <begin position="24"/>
        <end position="32"/>
    </location>
</feature>
<feature type="strand" evidence="3">
    <location>
        <begin position="37"/>
        <end position="49"/>
    </location>
</feature>
<feature type="helix" evidence="3">
    <location>
        <begin position="53"/>
        <end position="55"/>
    </location>
</feature>
<feature type="strand" evidence="3">
    <location>
        <begin position="57"/>
        <end position="61"/>
    </location>
</feature>
<feature type="strand" evidence="3">
    <location>
        <begin position="65"/>
        <end position="67"/>
    </location>
</feature>
<feature type="strand" evidence="3">
    <location>
        <begin position="69"/>
        <end position="74"/>
    </location>
</feature>
<feature type="helix" evidence="3">
    <location>
        <begin position="78"/>
        <end position="80"/>
    </location>
</feature>
<feature type="strand" evidence="3">
    <location>
        <begin position="82"/>
        <end position="87"/>
    </location>
</feature>
<feature type="strand" evidence="3">
    <location>
        <begin position="92"/>
        <end position="94"/>
    </location>
</feature>
<feature type="helix" evidence="3">
    <location>
        <begin position="99"/>
        <end position="102"/>
    </location>
</feature>
<feature type="turn" evidence="3">
    <location>
        <begin position="104"/>
        <end position="107"/>
    </location>
</feature>